<protein>
    <recommendedName>
        <fullName evidence="15">Gas vesicle protein L1</fullName>
        <shortName evidence="15">GvpL1</shortName>
    </recommendedName>
</protein>
<geneLocation type="plasmid">
    <name>pNRC100</name>
</geneLocation>
<geneLocation type="plasmid">
    <name>pNRC200</name>
</geneLocation>
<geneLocation type="plasmid">
    <name>pHH1</name>
</geneLocation>
<reference evidence="22" key="1">
    <citation type="journal article" date="1991" name="Gene">
        <title>Structure and organization of the gas vesicle gene cluster on the Halobacterium halobium plasmid pNRC100.</title>
        <authorList>
            <person name="Jones J.G."/>
            <person name="Young D.C."/>
            <person name="Dassarma S."/>
        </authorList>
    </citation>
    <scope>NUCLEOTIDE SEQUENCE [GENOMIC DNA]</scope>
    <source>
        <strain>ATCC 700922 / JCM 11081 / NRC-1</strain>
        <plasmid>pNRC100</plasmid>
    </source>
</reference>
<reference evidence="24" key="2">
    <citation type="journal article" date="1991" name="Mol. Microbiol.">
        <title>A DNA region of 9 kbp contains all genes necessary for gas vesicle synthesis in halophilic archaebacteria.</title>
        <authorList>
            <person name="Horne M."/>
            <person name="Englert C."/>
            <person name="Wimmer C."/>
            <person name="Pfeifer F."/>
        </authorList>
    </citation>
    <scope>NUCLEOTIDE SEQUENCE [GENOMIC DNA]</scope>
    <scope>INDUCTION</scope>
    <source>
        <strain>NRC-817</strain>
        <plasmid>pHH1</plasmid>
    </source>
</reference>
<reference key="3">
    <citation type="journal article" date="1998" name="Genome Res.">
        <title>Snapshot of a large dynamic replicon in a halophilic archaeon: megaplasmid or minichromosome?</title>
        <authorList>
            <person name="Ng W.V."/>
            <person name="Ciufo S.A."/>
            <person name="Smith T.M."/>
            <person name="Bumgarner R.E."/>
            <person name="Baskin D."/>
            <person name="Faust J."/>
            <person name="Hall B."/>
            <person name="Loretz C."/>
            <person name="Seto J."/>
            <person name="Slagel J."/>
            <person name="Hood L."/>
            <person name="DasSarma S."/>
        </authorList>
    </citation>
    <scope>NUCLEOTIDE SEQUENCE [LARGE SCALE GENOMIC DNA]</scope>
    <source>
        <strain>ATCC 700922 / JCM 11081 / NRC-1</strain>
        <plasmid>pNRC100</plasmid>
    </source>
</reference>
<reference evidence="23" key="4">
    <citation type="journal article" date="2000" name="Proc. Natl. Acad. Sci. U.S.A.">
        <title>Genome sequence of Halobacterium species NRC-1.</title>
        <authorList>
            <person name="Ng W.V."/>
            <person name="Kennedy S.P."/>
            <person name="Mahairas G.G."/>
            <person name="Berquist B."/>
            <person name="Pan M."/>
            <person name="Shukla H.D."/>
            <person name="Lasky S.R."/>
            <person name="Baliga N.S."/>
            <person name="Thorsson V."/>
            <person name="Sbrogna J."/>
            <person name="Swartzell S."/>
            <person name="Weir D."/>
            <person name="Hall J."/>
            <person name="Dahl T.A."/>
            <person name="Welti R."/>
            <person name="Goo Y.A."/>
            <person name="Leithauser B."/>
            <person name="Keller K."/>
            <person name="Cruz R."/>
            <person name="Danson M.J."/>
            <person name="Hough D.W."/>
            <person name="Maddocks D.G."/>
            <person name="Jablonski P.E."/>
            <person name="Krebs M.P."/>
            <person name="Angevine C.M."/>
            <person name="Dale H."/>
            <person name="Isenbarger T.A."/>
            <person name="Peck R.F."/>
            <person name="Pohlschroder M."/>
            <person name="Spudich J.L."/>
            <person name="Jung K.-H."/>
            <person name="Alam M."/>
            <person name="Freitas T."/>
            <person name="Hou S."/>
            <person name="Daniels C.J."/>
            <person name="Dennis P.P."/>
            <person name="Omer A.D."/>
            <person name="Ebhardt H."/>
            <person name="Lowe T.M."/>
            <person name="Liang P."/>
            <person name="Riley M."/>
            <person name="Hood L."/>
            <person name="DasSarma S."/>
        </authorList>
    </citation>
    <scope>NUCLEOTIDE SEQUENCE [LARGE SCALE GENOMIC DNA]</scope>
    <source>
        <strain>ATCC 700922 / JCM 11081 / NRC-1</strain>
        <plasmid>pNRC200</plasmid>
    </source>
</reference>
<reference key="5">
    <citation type="journal article" date="1992" name="Gene">
        <title>Genetic transformation of a halophilic archaebacterium with a gas vesicle gene cluster restores its ability to float.</title>
        <authorList>
            <person name="Halladay J.T."/>
            <person name="Ng W.L."/>
            <person name="DasSarma S."/>
        </authorList>
    </citation>
    <scope>FUNCTION</scope>
    <scope>GAS VESICLE PRODUCTION</scope>
    <source>
        <strain>ATCC 700922 / JCM 11081 / NRC-1</strain>
        <plasmid>pNRC100</plasmid>
    </source>
</reference>
<reference key="6">
    <citation type="journal article" date="1992" name="J. Mol. Biol.">
        <title>Three different but related gene clusters encoding gas vesicles in halophilic archaea.</title>
        <authorList>
            <person name="Englert C."/>
            <person name="Krueger K."/>
            <person name="Offner S."/>
            <person name="Pfeifer F."/>
        </authorList>
    </citation>
    <scope>GAS VESICLE GENE CLUSTER</scope>
    <source>
        <strain>NRC-817</strain>
        <plasmid>pHH1</plasmid>
    </source>
</reference>
<reference key="7">
    <citation type="journal article" date="1994" name="J. Bacteriol.">
        <title>Wild-type gas vesicle formation requires at least ten genes in the gvp gene cluster of Halobacterium halobium plasmid pNRC100.</title>
        <authorList>
            <person name="DasSarma S."/>
            <person name="Arora P."/>
            <person name="Lin F."/>
            <person name="Molinari E."/>
            <person name="Yin L.R."/>
        </authorList>
    </citation>
    <scope>DISRUPTION PHENOTYPE</scope>
    <source>
        <strain>ATCC 700922 / JCM 11081 / NRC-1</strain>
        <plasmid>pNRC100</plasmid>
    </source>
</reference>
<reference key="8">
    <citation type="journal article" date="1995" name="Mol. Microbiol.">
        <title>Complementation studies with the gas vesicle-encoding p-vac region of Halobacterium salinarium PHH1 reveal a regulatory role for the p-gvpDE genes.</title>
        <authorList>
            <person name="Offner S."/>
            <person name="Pfeifer F."/>
        </authorList>
    </citation>
    <scope>FUNCTION</scope>
    <scope>INDUCTION</scope>
    <source>
        <strain>PHH1</strain>
    </source>
</reference>
<reference key="9">
    <citation type="journal article" date="1997" name="Microbiology">
        <title>Growth competition between Halobacterium salinarium strain PHH1 and mutants affected in gas vesicle synthesis.</title>
        <authorList>
            <person name="Beard S.J."/>
            <person name="Hayes P.K."/>
            <person name="Walsby A.E."/>
        </authorList>
    </citation>
    <scope>FUNCTION IN BUOYANCY</scope>
    <scope>POSSIBLE INDUCTION BY OXYGEN LIMITATION</scope>
    <source>
        <strain>PHH1</strain>
    </source>
</reference>
<reference key="10">
    <citation type="journal article" date="2000" name="J. Bacteriol.">
        <title>Eight of fourteen gvp genes are sufficient for formation of gas vesicles in halophilic archaea.</title>
        <authorList>
            <person name="Offner S."/>
            <person name="Hofacker A."/>
            <person name="Wanner G."/>
            <person name="Pfeifer F."/>
        </authorList>
    </citation>
    <scope>DISRUPTION PHENOTYPE</scope>
    <source>
        <strain>PHH1</strain>
        <plasmid>pHH1</plasmid>
    </source>
</reference>
<reference key="11">
    <citation type="journal article" date="2004" name="J. Bacteriol.">
        <title>Complexity of gas vesicle biogenesis in Halobacterium sp. strain NRC-1: identification of five new proteins.</title>
        <authorList>
            <person name="Shukla H.D."/>
            <person name="DasSarma S."/>
        </authorList>
    </citation>
    <scope>POSSIBLE FUNCTION</scope>
    <scope>SUBUNIT</scope>
    <scope>SUBCELLULAR LOCATION</scope>
    <source>
        <strain>ATCC 700922 / JCM 11081 / NRC-1</strain>
        <plasmid>pNRC100</plasmid>
    </source>
</reference>
<reference key="12">
    <citation type="journal article" date="2011" name="J. Proteome Res.">
        <title>New structural proteins of Halobacterium salinarum gas vesicle revealed by comparative proteomics analysis.</title>
        <authorList>
            <person name="Chu L.J."/>
            <person name="Chen M.C."/>
            <person name="Setter J."/>
            <person name="Tsai Y.S."/>
            <person name="Yang H."/>
            <person name="Fang X."/>
            <person name="Ting Y.S."/>
            <person name="Shaffer S.A."/>
            <person name="Taylor G.K."/>
            <person name="von Haller P.D."/>
            <person name="Goodlett D.R."/>
            <person name="Ng W.V."/>
        </authorList>
    </citation>
    <scope>SUBCELLULAR LOCATION</scope>
    <scope>IDENTIFICATION BY MASS SPECTROMETRY</scope>
    <source>
        <strain>ATCC 700922 / JCM 11081 / NRC-1</strain>
    </source>
</reference>
<reference key="13">
    <citation type="journal article" date="2014" name="Extremophiles">
        <title>The accessory gas vesicle protein GvpM of haloarchaea and its interaction partners during gas vesicle formation.</title>
        <authorList>
            <person name="Tavlaridou S."/>
            <person name="Winter K."/>
            <person name="Pfeifer F."/>
        </authorList>
    </citation>
    <scope>FUNCTION</scope>
    <scope>SUBUNIT</scope>
    <source>
        <strain>PHH1</strain>
    </source>
</reference>
<reference key="14">
    <citation type="journal article" date="2020" name="Front. Microbiol.">
        <title>Accessory Gvp Proteins Form a Complex During Gas Vesicle Formation of Haloarchaea.</title>
        <authorList>
            <person name="Voelkner K."/>
            <person name="Jost A."/>
            <person name="Pfeifer F."/>
        </authorList>
    </citation>
    <scope>FUNCTION</scope>
    <scope>SUBUNIT</scope>
    <source>
        <strain>PHH1</strain>
        <plasmid>pHH1</plasmid>
    </source>
</reference>
<reference key="15">
    <citation type="journal article" date="2021" name="Front. Microbiol.">
        <title>Effect of Mutations in GvpJ and GvpM on Gas Vesicle Formation of Halobacterium salinarum.</title>
        <authorList>
            <person name="Jost A."/>
            <person name="Knitsch R."/>
            <person name="Voelkner K."/>
            <person name="Pfeifer F."/>
        </authorList>
    </citation>
    <scope>INTERACTION WITH GVPG1; GVPJ1; GVPK1 AND GVPM1</scope>
    <source>
        <strain>PHH1</strain>
        <plasmid>pHH1</plasmid>
    </source>
</reference>
<reference key="16">
    <citation type="journal article" date="2022" name="Front. Microbiol.">
        <title>Interaction of the gas vesicle proteins GvpA, GvpC, GvpN, and GvpO of Halobacterium salinarum.</title>
        <authorList>
            <person name="Jost A."/>
            <person name="Pfeifer F."/>
        </authorList>
    </citation>
    <scope>FUNCTION</scope>
    <scope>SUBUNIT</scope>
    <source>
        <strain>PHH1</strain>
        <plasmid>pHH1</plasmid>
    </source>
</reference>
<organism>
    <name type="scientific">Halobacterium salinarum (strain ATCC 700922 / JCM 11081 / NRC-1)</name>
    <name type="common">Halobacterium halobium</name>
    <dbReference type="NCBI Taxonomy" id="64091"/>
    <lineage>
        <taxon>Archaea</taxon>
        <taxon>Methanobacteriati</taxon>
        <taxon>Methanobacteriota</taxon>
        <taxon>Stenosarchaea group</taxon>
        <taxon>Halobacteria</taxon>
        <taxon>Halobacteriales</taxon>
        <taxon>Halobacteriaceae</taxon>
        <taxon>Halobacterium</taxon>
        <taxon>Halobacterium salinarum NRC-34001</taxon>
    </lineage>
</organism>
<proteinExistence type="evidence at protein level"/>
<gene>
    <name type="primary">gvpL11</name>
    <name evidence="14" type="synonym">gvpL</name>
    <name evidence="13" type="synonym">p-gvpL</name>
    <name type="ordered locus">VNG_5020G</name>
</gene>
<gene>
    <name evidence="23" type="primary">gvpL1</name>
    <name evidence="23" type="ordered locus">VNG_6020G</name>
</gene>
<dbReference type="EMBL" id="M58557">
    <property type="protein sequence ID" value="AAA98187.1"/>
    <property type="molecule type" value="Genomic_DNA"/>
</dbReference>
<dbReference type="EMBL" id="X55648">
    <property type="protein sequence ID" value="CAA39179.1"/>
    <property type="molecule type" value="Genomic_DNA"/>
</dbReference>
<dbReference type="EMBL" id="AF016485">
    <property type="protein sequence ID" value="AAC82800.1"/>
    <property type="molecule type" value="Genomic_DNA"/>
</dbReference>
<dbReference type="EMBL" id="AE004438">
    <property type="protein sequence ID" value="AAG20717.1"/>
    <property type="molecule type" value="Genomic_DNA"/>
</dbReference>
<dbReference type="PIR" id="T08233">
    <property type="entry name" value="T08233"/>
</dbReference>
<dbReference type="RefSeq" id="WP_010890528.1">
    <property type="nucleotide sequence ID" value="NC_001869.1"/>
</dbReference>
<dbReference type="SMR" id="Q9HI27"/>
<dbReference type="GeneID" id="5954627"/>
<dbReference type="KEGG" id="hal:gvpL"/>
<dbReference type="KEGG" id="hal:VNG_6020G"/>
<dbReference type="PATRIC" id="fig|64091.14.peg.2091"/>
<dbReference type="HOGENOM" id="CLU_065736_1_0_2"/>
<dbReference type="InParanoid" id="Q9HI27"/>
<dbReference type="OrthoDB" id="350702at2157"/>
<dbReference type="PhylomeDB" id="Q9HI27"/>
<dbReference type="Proteomes" id="UP000000554">
    <property type="component" value="Plasmid pNRC100"/>
</dbReference>
<dbReference type="Proteomes" id="UP000000554">
    <property type="component" value="Plasmid pNRC200"/>
</dbReference>
<dbReference type="GO" id="GO:0005737">
    <property type="term" value="C:cytoplasm"/>
    <property type="evidence" value="ECO:0007669"/>
    <property type="project" value="UniProtKB-SubCell"/>
</dbReference>
<dbReference type="GO" id="GO:0031411">
    <property type="term" value="C:gas vesicle"/>
    <property type="evidence" value="ECO:0007669"/>
    <property type="project" value="UniProtKB-SubCell"/>
</dbReference>
<dbReference type="GO" id="GO:0031412">
    <property type="term" value="P:gas vesicle organization"/>
    <property type="evidence" value="ECO:0007669"/>
    <property type="project" value="InterPro"/>
</dbReference>
<dbReference type="InterPro" id="IPR054796">
    <property type="entry name" value="Gas_vesic_GvpL"/>
</dbReference>
<dbReference type="InterPro" id="IPR009430">
    <property type="entry name" value="GvpL/GvpF"/>
</dbReference>
<dbReference type="NCBIfam" id="NF045778">
    <property type="entry name" value="gas_vesic_GvpL"/>
    <property type="match status" value="1"/>
</dbReference>
<dbReference type="PANTHER" id="PTHR36852">
    <property type="entry name" value="PROTEIN GVPL 2"/>
    <property type="match status" value="1"/>
</dbReference>
<dbReference type="PANTHER" id="PTHR36852:SF1">
    <property type="entry name" value="PROTEIN GVPL 2"/>
    <property type="match status" value="1"/>
</dbReference>
<dbReference type="Pfam" id="PF06386">
    <property type="entry name" value="GvpL_GvpF"/>
    <property type="match status" value="1"/>
</dbReference>
<keyword id="KW-0963">Cytoplasm</keyword>
<keyword id="KW-0304">Gas vesicle</keyword>
<keyword id="KW-0614">Plasmid</keyword>
<keyword id="KW-1185">Reference proteome</keyword>
<evidence type="ECO:0000269" key="1">
    <source>
    </source>
</evidence>
<evidence type="ECO:0000269" key="2">
    <source>
    </source>
</evidence>
<evidence type="ECO:0000269" key="3">
    <source>
    </source>
</evidence>
<evidence type="ECO:0000269" key="4">
    <source>
    </source>
</evidence>
<evidence type="ECO:0000269" key="5">
    <source>
    </source>
</evidence>
<evidence type="ECO:0000269" key="6">
    <source>
    </source>
</evidence>
<evidence type="ECO:0000269" key="7">
    <source>
    </source>
</evidence>
<evidence type="ECO:0000269" key="8">
    <source>
    </source>
</evidence>
<evidence type="ECO:0000269" key="9">
    <source>
    </source>
</evidence>
<evidence type="ECO:0000269" key="10">
    <source>
    </source>
</evidence>
<evidence type="ECO:0000269" key="11">
    <source>
    </source>
</evidence>
<evidence type="ECO:0000269" key="12">
    <source>
    </source>
</evidence>
<evidence type="ECO:0000303" key="13">
    <source>
    </source>
</evidence>
<evidence type="ECO:0000303" key="14">
    <source>
    </source>
</evidence>
<evidence type="ECO:0000303" key="15">
    <source>
    </source>
</evidence>
<evidence type="ECO:0000305" key="16"/>
<evidence type="ECO:0000305" key="17">
    <source>
    </source>
</evidence>
<evidence type="ECO:0000305" key="18">
    <source>
    </source>
</evidence>
<evidence type="ECO:0000305" key="19">
    <source>
    </source>
</evidence>
<evidence type="ECO:0000305" key="20">
    <source>
    </source>
</evidence>
<evidence type="ECO:0000305" key="21">
    <source>
    </source>
</evidence>
<evidence type="ECO:0000312" key="22">
    <source>
        <dbReference type="EMBL" id="AAA98187.1"/>
    </source>
</evidence>
<evidence type="ECO:0000312" key="23">
    <source>
        <dbReference type="EMBL" id="AAG20717.1"/>
    </source>
</evidence>
<evidence type="ECO:0000312" key="24">
    <source>
        <dbReference type="EMBL" id="CAA39179.1"/>
    </source>
</evidence>
<accession>Q9HI27</accession>
<accession>P24376</accession>
<accession>P57733</accession>
<name>GVPL1_HALSA</name>
<feature type="chain" id="PRO_0000182699" description="Gas vesicle protein L1">
    <location>
        <begin position="1"/>
        <end position="281"/>
    </location>
</feature>
<feature type="sequence conflict" description="In Ref. 2; CAA39179." evidence="16" ref="2">
    <original>QQQSG</original>
    <variation>HNNRA</variation>
    <location>
        <begin position="168"/>
        <end position="172"/>
    </location>
</feature>
<sequence>MTDHRPSPEEEQTTANEERTVSNGRYLYCVVDTTSSESATLSTTGVDDNPVYVVEADGVGAVVHDCETVYETEDLEQVKRWLVTHQQVVDAASDAFGTPLPMRFDTVLEGGDASIERWLEDHYEGFRDELASFAGVWEYRINLLWDSAPFEETIADRDDRLRELRQRQQQSGAGKKFLLEKQSDQRLQELKRERRTELADQLKEAITPVVNDLTEQDTNTPLQDEHSSIEKEQIVRFAVLADEDDETALGDRLDTIVEHEGVEIRFTGPWPPYTFAPDIGK</sequence>
<comment type="function">
    <text evidence="4 7 8 10 17 19 20">Proteins GvpF to GvpM might be involved in nucleating gas vesicle formation (Probable) (PubMed:15126480, PubMed:24846741, PubMed:33281806). A minor component of the gas vesicle (PubMed:15126480). This the only minor gas vesicle protein that binds all the others (including GvpC1, GvpN1 and GvpO1, but not GvpA1), suggesting it might be able to assemble them (PubMed:33281806, PubMed:35966690). Gas vesicles are hollow, gas filled proteinaceous nanostructures found in several microbial planktonic microorganisms. They allow positioning of halobacteria at the optimal depth for growth in the poorly aerated, shallow brine pools of their habitat (PubMed:33711860).</text>
</comment>
<comment type="function">
    <text evidence="1 2 3 11 12">Expression of a 9.5 kb p-vac DNA fragment containing 2 divergently transcribed regions (gvpD-gvpE-gvpF-gvpG-gvpH-gvpI-gvpJ-gvpK-gvpL-gvpM and gvpA-gvpC-gvpN-gvpO) allows H.volcanii to produce gas vesicles (PubMed:10894744, PubMed:1404376, PubMed:7651141). A minimal gas vesicle can be made in H.volcanii by gvpA1-gvpO1 plus gvpF1-gvpG1-gvpJ1-gvpK1-gvpL1-gvpM1; lack of enough GvpJ1 prevents their formation (PubMed:10894744). A similar region restores gas vesicle production in H.halobium without the p-vac locus, but it still has the c-vac locus (PubMed:1398080, PubMed:8002589).</text>
</comment>
<comment type="subunit">
    <text evidence="6 7 9 10 17">May form oligomers (Probable). GvpF to GvpM interact with each other in vitro, and may form multi-subunit complex(es) (PubMed:24846741, PubMed:33281806, PubMed:34975818). Interacts with GvpC1, GvpN1 and GvpO1 (PubMed:35966690).</text>
</comment>
<comment type="subcellular location">
    <subcellularLocation>
        <location evidence="4">Gas vesicle</location>
    </subcellularLocation>
    <subcellularLocation>
        <location evidence="18">Cytoplasm</location>
    </subcellularLocation>
</comment>
<comment type="induction">
    <text evidence="5 8 21">Probably part of a gvpF1-gvpG1-gvpH1-gvpI1-gvpJ1-gvpK1-gvpL1-gvpM1 operon, maximally expressed in early to mid log phase (Probable) (PubMed:1956294). Gas vesicles appear earlier when grown in static culture, possibly due to O(2)-limitation (PubMed:33711860).</text>
</comment>
<comment type="disruption phenotype">
    <text evidence="1 12">A single deletion produces no gas vesicles.</text>
</comment>
<comment type="miscellaneous">
    <text evidence="3 5 8">Encoded in a 14-gene plasmid locus called p-vac which produces predominantly short, spindle-shaped gas vesicles during all stages of growth.</text>
</comment>
<comment type="similarity">
    <text evidence="16">Belongs to the gas vesicle GvpF/GvpL family.</text>
</comment>